<feature type="chain" id="PRO_0000309646" description="Hydroxyacylglutathione hydrolase">
    <location>
        <begin position="1"/>
        <end position="252"/>
    </location>
</feature>
<feature type="binding site" evidence="1">
    <location>
        <position position="54"/>
    </location>
    <ligand>
        <name>Zn(2+)</name>
        <dbReference type="ChEBI" id="CHEBI:29105"/>
        <label>1</label>
    </ligand>
</feature>
<feature type="binding site" evidence="1">
    <location>
        <position position="56"/>
    </location>
    <ligand>
        <name>Zn(2+)</name>
        <dbReference type="ChEBI" id="CHEBI:29105"/>
        <label>1</label>
    </ligand>
</feature>
<feature type="binding site" evidence="1">
    <location>
        <position position="58"/>
    </location>
    <ligand>
        <name>Zn(2+)</name>
        <dbReference type="ChEBI" id="CHEBI:29105"/>
        <label>2</label>
    </ligand>
</feature>
<feature type="binding site" evidence="1">
    <location>
        <position position="59"/>
    </location>
    <ligand>
        <name>Zn(2+)</name>
        <dbReference type="ChEBI" id="CHEBI:29105"/>
        <label>2</label>
    </ligand>
</feature>
<feature type="binding site" evidence="1">
    <location>
        <position position="111"/>
    </location>
    <ligand>
        <name>Zn(2+)</name>
        <dbReference type="ChEBI" id="CHEBI:29105"/>
        <label>1</label>
    </ligand>
</feature>
<feature type="binding site" evidence="1">
    <location>
        <position position="130"/>
    </location>
    <ligand>
        <name>Zn(2+)</name>
        <dbReference type="ChEBI" id="CHEBI:29105"/>
        <label>1</label>
    </ligand>
</feature>
<feature type="binding site" evidence="1">
    <location>
        <position position="130"/>
    </location>
    <ligand>
        <name>Zn(2+)</name>
        <dbReference type="ChEBI" id="CHEBI:29105"/>
        <label>2</label>
    </ligand>
</feature>
<feature type="binding site" evidence="1">
    <location>
        <position position="170"/>
    </location>
    <ligand>
        <name>Zn(2+)</name>
        <dbReference type="ChEBI" id="CHEBI:29105"/>
        <label>2</label>
    </ligand>
</feature>
<keyword id="KW-0378">Hydrolase</keyword>
<keyword id="KW-0479">Metal-binding</keyword>
<keyword id="KW-0862">Zinc</keyword>
<dbReference type="EC" id="3.1.2.6" evidence="1"/>
<dbReference type="EMBL" id="CP000608">
    <property type="protein sequence ID" value="ABO46402.1"/>
    <property type="molecule type" value="Genomic_DNA"/>
</dbReference>
<dbReference type="RefSeq" id="WP_003022214.1">
    <property type="nucleotide sequence ID" value="NC_009257.1"/>
</dbReference>
<dbReference type="SMR" id="A4IWV0"/>
<dbReference type="KEGG" id="ftw:FTW_0483"/>
<dbReference type="HOGENOM" id="CLU_030571_4_1_6"/>
<dbReference type="UniPathway" id="UPA00619">
    <property type="reaction ID" value="UER00676"/>
</dbReference>
<dbReference type="GO" id="GO:0004416">
    <property type="term" value="F:hydroxyacylglutathione hydrolase activity"/>
    <property type="evidence" value="ECO:0007669"/>
    <property type="project" value="UniProtKB-UniRule"/>
</dbReference>
<dbReference type="GO" id="GO:0046872">
    <property type="term" value="F:metal ion binding"/>
    <property type="evidence" value="ECO:0007669"/>
    <property type="project" value="UniProtKB-KW"/>
</dbReference>
<dbReference type="GO" id="GO:0019243">
    <property type="term" value="P:methylglyoxal catabolic process to D-lactate via S-lactoyl-glutathione"/>
    <property type="evidence" value="ECO:0007669"/>
    <property type="project" value="InterPro"/>
</dbReference>
<dbReference type="CDD" id="cd07723">
    <property type="entry name" value="hydroxyacylglutathione_hydrolase_MBL-fold"/>
    <property type="match status" value="1"/>
</dbReference>
<dbReference type="Gene3D" id="3.60.15.10">
    <property type="entry name" value="Ribonuclease Z/Hydroxyacylglutathione hydrolase-like"/>
    <property type="match status" value="1"/>
</dbReference>
<dbReference type="HAMAP" id="MF_01374">
    <property type="entry name" value="Glyoxalase_2"/>
    <property type="match status" value="1"/>
</dbReference>
<dbReference type="InterPro" id="IPR035680">
    <property type="entry name" value="Clx_II_MBL"/>
</dbReference>
<dbReference type="InterPro" id="IPR050110">
    <property type="entry name" value="Glyoxalase_II_hydrolase"/>
</dbReference>
<dbReference type="InterPro" id="IPR032282">
    <property type="entry name" value="HAGH_C"/>
</dbReference>
<dbReference type="InterPro" id="IPR017782">
    <property type="entry name" value="Hydroxyacylglutathione_Hdrlase"/>
</dbReference>
<dbReference type="InterPro" id="IPR001279">
    <property type="entry name" value="Metallo-B-lactamas"/>
</dbReference>
<dbReference type="InterPro" id="IPR036866">
    <property type="entry name" value="RibonucZ/Hydroxyglut_hydro"/>
</dbReference>
<dbReference type="PANTHER" id="PTHR43705">
    <property type="entry name" value="HYDROXYACYLGLUTATHIONE HYDROLASE"/>
    <property type="match status" value="1"/>
</dbReference>
<dbReference type="PANTHER" id="PTHR43705:SF1">
    <property type="entry name" value="HYDROXYACYLGLUTATHIONE HYDROLASE GLOB"/>
    <property type="match status" value="1"/>
</dbReference>
<dbReference type="Pfam" id="PF16123">
    <property type="entry name" value="HAGH_C"/>
    <property type="match status" value="1"/>
</dbReference>
<dbReference type="Pfam" id="PF00753">
    <property type="entry name" value="Lactamase_B"/>
    <property type="match status" value="1"/>
</dbReference>
<dbReference type="SMART" id="SM00849">
    <property type="entry name" value="Lactamase_B"/>
    <property type="match status" value="1"/>
</dbReference>
<dbReference type="SUPFAM" id="SSF56281">
    <property type="entry name" value="Metallo-hydrolase/oxidoreductase"/>
    <property type="match status" value="1"/>
</dbReference>
<name>GLO2_FRATW</name>
<sequence length="252" mass="28849">MQIKRWFLNNSLRNYQYLLYDKSHAIVIDPLKSDIFAEFIAKNKLQLEAILITHKHGDHIAGVKKLLAIYLNAKVYAYTGNDLFKPDIYVKDGSFINLGFTSFRVMYIPGHIDDHVCFLFEQERALFCGDTLFNAGVGGVQAESADINQLYDSLVKITKLDGDIKPYPAHDYWLGNLDFALSILADDSYFNYYRNQVAELAAEDKPIVNLAEEAKLNIFIRAMSDKALLKALPDYSLGREMFVKLRQLKNNF</sequence>
<gene>
    <name evidence="1" type="primary">gloB</name>
    <name type="ordered locus">FTW_0483</name>
</gene>
<accession>A4IWV0</accession>
<protein>
    <recommendedName>
        <fullName evidence="1">Hydroxyacylglutathione hydrolase</fullName>
        <ecNumber evidence="1">3.1.2.6</ecNumber>
    </recommendedName>
    <alternativeName>
        <fullName evidence="1">Glyoxalase II</fullName>
        <shortName evidence="1">Glx II</shortName>
    </alternativeName>
</protein>
<evidence type="ECO:0000255" key="1">
    <source>
        <dbReference type="HAMAP-Rule" id="MF_01374"/>
    </source>
</evidence>
<proteinExistence type="inferred from homology"/>
<reference key="1">
    <citation type="journal article" date="2007" name="PLoS ONE">
        <title>Complete genomic characterization of a pathogenic A.II strain of Francisella tularensis subspecies tularensis.</title>
        <authorList>
            <person name="Beckstrom-Sternberg S.M."/>
            <person name="Auerbach R.K."/>
            <person name="Godbole S."/>
            <person name="Pearson J.V."/>
            <person name="Beckstrom-Sternberg J.S."/>
            <person name="Deng Z."/>
            <person name="Munk C."/>
            <person name="Kubota K."/>
            <person name="Zhou Y."/>
            <person name="Bruce D."/>
            <person name="Noronha J."/>
            <person name="Scheuermann R.H."/>
            <person name="Wang A."/>
            <person name="Wei X."/>
            <person name="Wang J."/>
            <person name="Hao J."/>
            <person name="Wagner D.M."/>
            <person name="Brettin T.S."/>
            <person name="Brown N."/>
            <person name="Gilna P."/>
            <person name="Keim P.S."/>
        </authorList>
    </citation>
    <scope>NUCLEOTIDE SEQUENCE [LARGE SCALE GENOMIC DNA]</scope>
    <source>
        <strain>WY96-3418</strain>
    </source>
</reference>
<comment type="function">
    <text evidence="1">Thiolesterase that catalyzes the hydrolysis of S-D-lactoyl-glutathione to form glutathione and D-lactic acid.</text>
</comment>
<comment type="catalytic activity">
    <reaction evidence="1">
        <text>an S-(2-hydroxyacyl)glutathione + H2O = a 2-hydroxy carboxylate + glutathione + H(+)</text>
        <dbReference type="Rhea" id="RHEA:21864"/>
        <dbReference type="ChEBI" id="CHEBI:15377"/>
        <dbReference type="ChEBI" id="CHEBI:15378"/>
        <dbReference type="ChEBI" id="CHEBI:57925"/>
        <dbReference type="ChEBI" id="CHEBI:58896"/>
        <dbReference type="ChEBI" id="CHEBI:71261"/>
        <dbReference type="EC" id="3.1.2.6"/>
    </reaction>
</comment>
<comment type="cofactor">
    <cofactor evidence="1">
        <name>Zn(2+)</name>
        <dbReference type="ChEBI" id="CHEBI:29105"/>
    </cofactor>
    <text evidence="1">Binds 2 Zn(2+) ions per subunit.</text>
</comment>
<comment type="pathway">
    <text evidence="1">Secondary metabolite metabolism; methylglyoxal degradation; (R)-lactate from methylglyoxal: step 2/2.</text>
</comment>
<comment type="subunit">
    <text evidence="1">Monomer.</text>
</comment>
<comment type="similarity">
    <text evidence="1">Belongs to the metallo-beta-lactamase superfamily. Glyoxalase II family.</text>
</comment>
<organism>
    <name type="scientific">Francisella tularensis subsp. tularensis (strain WY96-3418)</name>
    <dbReference type="NCBI Taxonomy" id="418136"/>
    <lineage>
        <taxon>Bacteria</taxon>
        <taxon>Pseudomonadati</taxon>
        <taxon>Pseudomonadota</taxon>
        <taxon>Gammaproteobacteria</taxon>
        <taxon>Thiotrichales</taxon>
        <taxon>Francisellaceae</taxon>
        <taxon>Francisella</taxon>
    </lineage>
</organism>